<feature type="chain" id="PRO_0000174952" description="Thymidine kinase">
    <location>
        <begin position="1"/>
        <end position="271"/>
    </location>
</feature>
<feature type="active site" description="Proton acceptor" evidence="2">
    <location>
        <position position="153"/>
    </location>
</feature>
<feature type="binding site" evidence="2">
    <location>
        <begin position="74"/>
        <end position="81"/>
    </location>
    <ligand>
        <name>ATP</name>
        <dbReference type="ChEBI" id="CHEBI:30616"/>
    </ligand>
</feature>
<feature type="binding site" evidence="1">
    <location>
        <begin position="152"/>
        <end position="155"/>
    </location>
    <ligand>
        <name>ATP</name>
        <dbReference type="ChEBI" id="CHEBI:30616"/>
    </ligand>
</feature>
<feature type="binding site" evidence="1">
    <location>
        <position position="184"/>
    </location>
    <ligand>
        <name>substrate</name>
    </ligand>
</feature>
<feature type="binding site" evidence="1">
    <location>
        <position position="209"/>
    </location>
    <ligand>
        <name>Zn(2+)</name>
        <dbReference type="ChEBI" id="CHEBI:29105"/>
    </ligand>
</feature>
<feature type="binding site" evidence="1">
    <location>
        <position position="212"/>
    </location>
    <ligand>
        <name>Zn(2+)</name>
        <dbReference type="ChEBI" id="CHEBI:29105"/>
    </ligand>
</feature>
<feature type="binding site" evidence="1">
    <location>
        <position position="237"/>
    </location>
    <ligand>
        <name>substrate</name>
    </ligand>
</feature>
<feature type="binding site" evidence="1">
    <location>
        <position position="241"/>
    </location>
    <ligand>
        <name>Zn(2+)</name>
        <dbReference type="ChEBI" id="CHEBI:29105"/>
    </ligand>
</feature>
<feature type="splice variant" id="VSP_018389" description="In isoform 2." evidence="3 4">
    <location>
        <position position="96"/>
    </location>
</feature>
<proteinExistence type="evidence at transcript level"/>
<name>KITH_ORYSJ</name>
<accession>O81263</accession>
<accession>Q8GZX9</accession>
<dbReference type="EC" id="2.7.1.21"/>
<dbReference type="EMBL" id="AC134237">
    <property type="protein sequence ID" value="AAO17013.1"/>
    <property type="molecule type" value="Genomic_DNA"/>
</dbReference>
<dbReference type="EMBL" id="AP014959">
    <property type="status" value="NOT_ANNOTATED_CDS"/>
    <property type="molecule type" value="Genomic_DNA"/>
</dbReference>
<dbReference type="EMBL" id="AK066124">
    <property type="status" value="NOT_ANNOTATED_CDS"/>
    <property type="molecule type" value="mRNA"/>
</dbReference>
<dbReference type="EMBL" id="AK068779">
    <property type="status" value="NOT_ANNOTATED_CDS"/>
    <property type="molecule type" value="mRNA"/>
</dbReference>
<dbReference type="EMBL" id="AF066050">
    <property type="protein sequence ID" value="AAC31168.1"/>
    <property type="status" value="ALT_INIT"/>
    <property type="molecule type" value="mRNA"/>
</dbReference>
<dbReference type="PIR" id="T02888">
    <property type="entry name" value="T02888"/>
</dbReference>
<dbReference type="SMR" id="O81263"/>
<dbReference type="FunCoup" id="O81263">
    <property type="interactions" value="118"/>
</dbReference>
<dbReference type="STRING" id="39947.O81263"/>
<dbReference type="PaxDb" id="39947-O81263"/>
<dbReference type="eggNOG" id="KOG3125">
    <property type="taxonomic scope" value="Eukaryota"/>
</dbReference>
<dbReference type="InParanoid" id="O81263"/>
<dbReference type="Proteomes" id="UP000000763">
    <property type="component" value="Chromosome 3"/>
</dbReference>
<dbReference type="Proteomes" id="UP000059680">
    <property type="component" value="Chromosome 3"/>
</dbReference>
<dbReference type="GO" id="GO:0005524">
    <property type="term" value="F:ATP binding"/>
    <property type="evidence" value="ECO:0007669"/>
    <property type="project" value="UniProtKB-KW"/>
</dbReference>
<dbReference type="GO" id="GO:0046872">
    <property type="term" value="F:metal ion binding"/>
    <property type="evidence" value="ECO:0007669"/>
    <property type="project" value="UniProtKB-KW"/>
</dbReference>
<dbReference type="GO" id="GO:0004797">
    <property type="term" value="F:thymidine kinase activity"/>
    <property type="evidence" value="ECO:0000318"/>
    <property type="project" value="GO_Central"/>
</dbReference>
<dbReference type="GO" id="GO:0071897">
    <property type="term" value="P:DNA biosynthetic process"/>
    <property type="evidence" value="ECO:0007669"/>
    <property type="project" value="UniProtKB-KW"/>
</dbReference>
<dbReference type="GO" id="GO:0046104">
    <property type="term" value="P:thymidine metabolic process"/>
    <property type="evidence" value="ECO:0000318"/>
    <property type="project" value="GO_Central"/>
</dbReference>
<dbReference type="FunFam" id="3.30.60.20:FF:000051">
    <property type="entry name" value="Thymidine kinase"/>
    <property type="match status" value="1"/>
</dbReference>
<dbReference type="FunFam" id="3.40.50.300:FF:000948">
    <property type="entry name" value="Thymidine kinase"/>
    <property type="match status" value="1"/>
</dbReference>
<dbReference type="Gene3D" id="3.30.60.20">
    <property type="match status" value="1"/>
</dbReference>
<dbReference type="Gene3D" id="3.40.50.300">
    <property type="entry name" value="P-loop containing nucleotide triphosphate hydrolases"/>
    <property type="match status" value="1"/>
</dbReference>
<dbReference type="InterPro" id="IPR027417">
    <property type="entry name" value="P-loop_NTPase"/>
</dbReference>
<dbReference type="InterPro" id="IPR001267">
    <property type="entry name" value="Thymidine_kinase"/>
</dbReference>
<dbReference type="InterPro" id="IPR020633">
    <property type="entry name" value="Thymidine_kinase_CS"/>
</dbReference>
<dbReference type="PANTHER" id="PTHR11441">
    <property type="entry name" value="THYMIDINE KINASE"/>
    <property type="match status" value="1"/>
</dbReference>
<dbReference type="PANTHER" id="PTHR11441:SF0">
    <property type="entry name" value="THYMIDINE KINASE, CYTOSOLIC"/>
    <property type="match status" value="1"/>
</dbReference>
<dbReference type="Pfam" id="PF00265">
    <property type="entry name" value="TK"/>
    <property type="match status" value="1"/>
</dbReference>
<dbReference type="SUPFAM" id="SSF57716">
    <property type="entry name" value="Glucocorticoid receptor-like (DNA-binding domain)"/>
    <property type="match status" value="1"/>
</dbReference>
<dbReference type="SUPFAM" id="SSF52540">
    <property type="entry name" value="P-loop containing nucleoside triphosphate hydrolases"/>
    <property type="match status" value="1"/>
</dbReference>
<dbReference type="PROSITE" id="PS00603">
    <property type="entry name" value="TK_CELLULAR_TYPE"/>
    <property type="match status" value="1"/>
</dbReference>
<evidence type="ECO:0000250" key="1"/>
<evidence type="ECO:0000255" key="2"/>
<evidence type="ECO:0000303" key="3">
    <source>
    </source>
</evidence>
<evidence type="ECO:0000303" key="4">
    <source ref="5"/>
</evidence>
<evidence type="ECO:0000305" key="5"/>
<comment type="catalytic activity">
    <reaction>
        <text>thymidine + ATP = dTMP + ADP + H(+)</text>
        <dbReference type="Rhea" id="RHEA:19129"/>
        <dbReference type="ChEBI" id="CHEBI:15378"/>
        <dbReference type="ChEBI" id="CHEBI:17748"/>
        <dbReference type="ChEBI" id="CHEBI:30616"/>
        <dbReference type="ChEBI" id="CHEBI:63528"/>
        <dbReference type="ChEBI" id="CHEBI:456216"/>
        <dbReference type="EC" id="2.7.1.21"/>
    </reaction>
</comment>
<comment type="alternative products">
    <event type="alternative splicing"/>
    <isoform>
        <id>O81263-1</id>
        <name>1</name>
        <sequence type="displayed"/>
    </isoform>
    <isoform>
        <id>O81263-2</id>
        <name>2</name>
        <sequence type="described" ref="VSP_018389"/>
    </isoform>
</comment>
<comment type="miscellaneous">
    <molecule>Isoform 2</molecule>
    <text evidence="5">May be due to a competing acceptor splice site.</text>
</comment>
<comment type="similarity">
    <text evidence="5">Belongs to the thymidine kinase family.</text>
</comment>
<comment type="sequence caution" evidence="5">
    <conflict type="erroneous initiation">
        <sequence resource="EMBL-CDS" id="AAC31168"/>
    </conflict>
</comment>
<reference key="1">
    <citation type="journal article" date="2005" name="Genome Res.">
        <title>Sequence, annotation, and analysis of synteny between rice chromosome 3 and diverged grass species.</title>
        <authorList>
            <consortium name="The rice chromosome 3 sequencing consortium"/>
            <person name="Buell C.R."/>
            <person name="Yuan Q."/>
            <person name="Ouyang S."/>
            <person name="Liu J."/>
            <person name="Zhu W."/>
            <person name="Wang A."/>
            <person name="Maiti R."/>
            <person name="Haas B."/>
            <person name="Wortman J."/>
            <person name="Pertea M."/>
            <person name="Jones K.M."/>
            <person name="Kim M."/>
            <person name="Overton L."/>
            <person name="Tsitrin T."/>
            <person name="Fadrosh D."/>
            <person name="Bera J."/>
            <person name="Weaver B."/>
            <person name="Jin S."/>
            <person name="Johri S."/>
            <person name="Reardon M."/>
            <person name="Webb K."/>
            <person name="Hill J."/>
            <person name="Moffat K."/>
            <person name="Tallon L."/>
            <person name="Van Aken S."/>
            <person name="Lewis M."/>
            <person name="Utterback T."/>
            <person name="Feldblyum T."/>
            <person name="Zismann V."/>
            <person name="Iobst S."/>
            <person name="Hsiao J."/>
            <person name="de Vazeille A.R."/>
            <person name="Salzberg S.L."/>
            <person name="White O."/>
            <person name="Fraser C.M."/>
            <person name="Yu Y."/>
            <person name="Kim H."/>
            <person name="Rambo T."/>
            <person name="Currie J."/>
            <person name="Collura K."/>
            <person name="Kernodle-Thompson S."/>
            <person name="Wei F."/>
            <person name="Kudrna K."/>
            <person name="Ammiraju J.S.S."/>
            <person name="Luo M."/>
            <person name="Goicoechea J.L."/>
            <person name="Wing R.A."/>
            <person name="Henry D."/>
            <person name="Oates R."/>
            <person name="Palmer M."/>
            <person name="Pries G."/>
            <person name="Saski C."/>
            <person name="Simmons J."/>
            <person name="Soderlund C."/>
            <person name="Nelson W."/>
            <person name="de la Bastide M."/>
            <person name="Spiegel L."/>
            <person name="Nascimento L."/>
            <person name="Huang E."/>
            <person name="Preston R."/>
            <person name="Zutavern T."/>
            <person name="Palmer L."/>
            <person name="O'Shaughnessy A."/>
            <person name="Dike S."/>
            <person name="McCombie W.R."/>
            <person name="Minx P."/>
            <person name="Cordum H."/>
            <person name="Wilson R."/>
            <person name="Jin W."/>
            <person name="Lee H.R."/>
            <person name="Jiang J."/>
            <person name="Jackson S."/>
        </authorList>
    </citation>
    <scope>NUCLEOTIDE SEQUENCE [LARGE SCALE GENOMIC DNA]</scope>
    <source>
        <strain>cv. Nipponbare</strain>
    </source>
</reference>
<reference key="2">
    <citation type="journal article" date="2005" name="Nature">
        <title>The map-based sequence of the rice genome.</title>
        <authorList>
            <consortium name="International rice genome sequencing project (IRGSP)"/>
        </authorList>
    </citation>
    <scope>NUCLEOTIDE SEQUENCE [LARGE SCALE GENOMIC DNA]</scope>
    <source>
        <strain>cv. Nipponbare</strain>
    </source>
</reference>
<reference key="3">
    <citation type="journal article" date="2013" name="Rice">
        <title>Improvement of the Oryza sativa Nipponbare reference genome using next generation sequence and optical map data.</title>
        <authorList>
            <person name="Kawahara Y."/>
            <person name="de la Bastide M."/>
            <person name="Hamilton J.P."/>
            <person name="Kanamori H."/>
            <person name="McCombie W.R."/>
            <person name="Ouyang S."/>
            <person name="Schwartz D.C."/>
            <person name="Tanaka T."/>
            <person name="Wu J."/>
            <person name="Zhou S."/>
            <person name="Childs K.L."/>
            <person name="Davidson R.M."/>
            <person name="Lin H."/>
            <person name="Quesada-Ocampo L."/>
            <person name="Vaillancourt B."/>
            <person name="Sakai H."/>
            <person name="Lee S.S."/>
            <person name="Kim J."/>
            <person name="Numa H."/>
            <person name="Itoh T."/>
            <person name="Buell C.R."/>
            <person name="Matsumoto T."/>
        </authorList>
    </citation>
    <scope>GENOME REANNOTATION</scope>
    <source>
        <strain>cv. Nipponbare</strain>
    </source>
</reference>
<reference key="4">
    <citation type="journal article" date="2003" name="Science">
        <title>Collection, mapping, and annotation of over 28,000 cDNA clones from japonica rice.</title>
        <authorList>
            <consortium name="The rice full-length cDNA consortium"/>
        </authorList>
    </citation>
    <scope>NUCLEOTIDE SEQUENCE [LARGE SCALE MRNA] (ISOFORMS 1 AND 2)</scope>
    <source>
        <strain>cv. Nipponbare</strain>
    </source>
</reference>
<reference key="5">
    <citation type="online journal article" date="1999" name="Plant Gene Register">
        <title>A gene for thymidine kinase in plants.</title>
        <authorList>
            <person name="Ullah H."/>
            <person name="Robertson N."/>
            <person name="Fites R.C."/>
        </authorList>
        <locator>PGR99-048</locator>
    </citation>
    <scope>NUCLEOTIDE SEQUENCE [MRNA] OF 3-271 (ISOFORM 2)</scope>
    <source>
        <strain>cv. Nipponbare</strain>
        <tissue>Root</tissue>
    </source>
</reference>
<gene>
    <name type="primary">TK</name>
    <name type="ordered locus">Os03g0113100</name>
    <name type="ordered locus">LOC_Os03g02200</name>
    <name type="ORF">OSJNBa0090O10.3</name>
</gene>
<organism>
    <name type="scientific">Oryza sativa subsp. japonica</name>
    <name type="common">Rice</name>
    <dbReference type="NCBI Taxonomy" id="39947"/>
    <lineage>
        <taxon>Eukaryota</taxon>
        <taxon>Viridiplantae</taxon>
        <taxon>Streptophyta</taxon>
        <taxon>Embryophyta</taxon>
        <taxon>Tracheophyta</taxon>
        <taxon>Spermatophyta</taxon>
        <taxon>Magnoliopsida</taxon>
        <taxon>Liliopsida</taxon>
        <taxon>Poales</taxon>
        <taxon>Poaceae</taxon>
        <taxon>BOP clade</taxon>
        <taxon>Oryzoideae</taxon>
        <taxon>Oryzeae</taxon>
        <taxon>Oryzinae</taxon>
        <taxon>Oryza</taxon>
        <taxon>Oryza sativa</taxon>
    </lineage>
</organism>
<sequence>MRSLLAASTFLRSGASPLLRPLSRPLPSRLNLSRFGPVRPVSAAAAAADKSRGGGGSAMEAQPSYPGEIHVIVGPMFAGKTTALLRRVQVEAGTGSRNVALIKSDKDNRYGLDSVVTHDGTKMPCWALPELSSFQDKLGTEAYDKVDVIGIDEAQFFDDLHDFCCKAADRDGKIVVVAGLDGDYKRNKFGSVLDIIPLADSVTKLTARCELCGRRAFFTLRKTRETKTELIGGADVYMPVCRQHYLDGQIVIEATRIVLDLEKSKVIHAFK</sequence>
<keyword id="KW-0025">Alternative splicing</keyword>
<keyword id="KW-0067">ATP-binding</keyword>
<keyword id="KW-0237">DNA synthesis</keyword>
<keyword id="KW-0418">Kinase</keyword>
<keyword id="KW-0479">Metal-binding</keyword>
<keyword id="KW-0547">Nucleotide-binding</keyword>
<keyword id="KW-1185">Reference proteome</keyword>
<keyword id="KW-0808">Transferase</keyword>
<keyword id="KW-0862">Zinc</keyword>
<protein>
    <recommendedName>
        <fullName>Thymidine kinase</fullName>
        <ecNumber>2.7.1.21</ecNumber>
    </recommendedName>
</protein>